<evidence type="ECO:0000250" key="1">
    <source>
        <dbReference type="UniProtKB" id="Q6IB77"/>
    </source>
</evidence>
<evidence type="ECO:0000303" key="2">
    <source>
    </source>
</evidence>
<evidence type="ECO:0000305" key="3"/>
<evidence type="ECO:0007744" key="4">
    <source>
    </source>
</evidence>
<evidence type="ECO:0007744" key="5">
    <source>
    </source>
</evidence>
<gene>
    <name type="primary">Glyat</name>
</gene>
<dbReference type="EC" id="2.3.1.13" evidence="1"/>
<dbReference type="EC" id="2.3.1.71" evidence="1"/>
<dbReference type="EMBL" id="AK039262">
    <property type="protein sequence ID" value="BAC30297.1"/>
    <property type="molecule type" value="mRNA"/>
</dbReference>
<dbReference type="EMBL" id="AK143901">
    <property type="protein sequence ID" value="BAE25590.1"/>
    <property type="molecule type" value="mRNA"/>
</dbReference>
<dbReference type="EMBL" id="AK143803">
    <property type="protein sequence ID" value="BAE25544.1"/>
    <property type="molecule type" value="mRNA"/>
</dbReference>
<dbReference type="EMBL" id="BC010799">
    <property type="protein sequence ID" value="AAH10799.1"/>
    <property type="molecule type" value="mRNA"/>
</dbReference>
<dbReference type="EMBL" id="BC015294">
    <property type="protein sequence ID" value="AAH15294.1"/>
    <property type="molecule type" value="mRNA"/>
</dbReference>
<dbReference type="EMBL" id="BC024434">
    <property type="protein sequence ID" value="AAH24434.1"/>
    <property type="molecule type" value="mRNA"/>
</dbReference>
<dbReference type="CCDS" id="CCDS29633.1">
    <molecule id="Q91XE0-1"/>
</dbReference>
<dbReference type="RefSeq" id="NP_666047.1">
    <molecule id="Q91XE0-1"/>
    <property type="nucleotide sequence ID" value="NM_145935.3"/>
</dbReference>
<dbReference type="SMR" id="Q91XE0"/>
<dbReference type="FunCoup" id="Q91XE0">
    <property type="interactions" value="205"/>
</dbReference>
<dbReference type="IntAct" id="Q91XE0">
    <property type="interactions" value="1"/>
</dbReference>
<dbReference type="MINT" id="Q91XE0"/>
<dbReference type="STRING" id="10090.ENSMUSP00000043308"/>
<dbReference type="GlyGen" id="Q91XE0">
    <property type="glycosylation" value="2 sites, 1 O-linked glycan (1 site)"/>
</dbReference>
<dbReference type="iPTMnet" id="Q91XE0"/>
<dbReference type="PhosphoSitePlus" id="Q91XE0"/>
<dbReference type="SwissPalm" id="Q91XE0"/>
<dbReference type="jPOST" id="Q91XE0"/>
<dbReference type="PaxDb" id="10090-ENSMUSP00000043308"/>
<dbReference type="PeptideAtlas" id="Q91XE0"/>
<dbReference type="ProteomicsDB" id="271237">
    <molecule id="Q91XE0-1"/>
</dbReference>
<dbReference type="ProteomicsDB" id="271238">
    <molecule id="Q91XE0-2"/>
</dbReference>
<dbReference type="Antibodypedia" id="27684">
    <property type="antibodies" value="191 antibodies from 25 providers"/>
</dbReference>
<dbReference type="DNASU" id="107146"/>
<dbReference type="Ensembl" id="ENSMUST00000044976.12">
    <molecule id="Q91XE0-1"/>
    <property type="protein sequence ID" value="ENSMUSP00000043308.6"/>
    <property type="gene ID" value="ENSMUSG00000063683.13"/>
</dbReference>
<dbReference type="Ensembl" id="ENSMUST00000119960.2">
    <molecule id="Q91XE0-2"/>
    <property type="protein sequence ID" value="ENSMUSP00000114002.2"/>
    <property type="gene ID" value="ENSMUSG00000063683.13"/>
</dbReference>
<dbReference type="GeneID" id="107146"/>
<dbReference type="KEGG" id="mmu:107146"/>
<dbReference type="UCSC" id="uc008guh.1">
    <molecule id="Q91XE0-1"/>
    <property type="organism name" value="mouse"/>
</dbReference>
<dbReference type="AGR" id="MGI:2147502"/>
<dbReference type="CTD" id="10249"/>
<dbReference type="MGI" id="MGI:2147502">
    <property type="gene designation" value="Glyat"/>
</dbReference>
<dbReference type="VEuPathDB" id="HostDB:ENSMUSG00000063683"/>
<dbReference type="eggNOG" id="ENOG502SDQB">
    <property type="taxonomic scope" value="Eukaryota"/>
</dbReference>
<dbReference type="GeneTree" id="ENSGT00950000183133"/>
<dbReference type="HOGENOM" id="CLU_060336_0_0_1"/>
<dbReference type="InParanoid" id="Q91XE0"/>
<dbReference type="OMA" id="NTAMQKM"/>
<dbReference type="OrthoDB" id="61870at2759"/>
<dbReference type="PhylomeDB" id="Q91XE0"/>
<dbReference type="TreeFam" id="TF353258"/>
<dbReference type="BRENDA" id="2.3.1.13">
    <property type="organism ID" value="3474"/>
</dbReference>
<dbReference type="BRENDA" id="2.3.1.71">
    <property type="organism ID" value="3474"/>
</dbReference>
<dbReference type="Reactome" id="R-MMU-177128">
    <property type="pathway name" value="Conjugation of salicylate with glycine"/>
</dbReference>
<dbReference type="Reactome" id="R-MMU-177135">
    <property type="pathway name" value="Conjugation of benzoate with glycine"/>
</dbReference>
<dbReference type="Reactome" id="R-MMU-9749641">
    <property type="pathway name" value="Aspirin ADME"/>
</dbReference>
<dbReference type="BioGRID-ORCS" id="107146">
    <property type="hits" value="0 hits in 77 CRISPR screens"/>
</dbReference>
<dbReference type="ChiTaRS" id="Glyat">
    <property type="organism name" value="mouse"/>
</dbReference>
<dbReference type="PRO" id="PR:Q91XE0"/>
<dbReference type="Proteomes" id="UP000000589">
    <property type="component" value="Chromosome 19"/>
</dbReference>
<dbReference type="RNAct" id="Q91XE0">
    <property type="molecule type" value="protein"/>
</dbReference>
<dbReference type="Bgee" id="ENSMUSG00000063683">
    <property type="expression patterns" value="Expressed in right kidney and 66 other cell types or tissues"/>
</dbReference>
<dbReference type="GO" id="GO:0005739">
    <property type="term" value="C:mitochondrion"/>
    <property type="evidence" value="ECO:0007005"/>
    <property type="project" value="MGI"/>
</dbReference>
<dbReference type="GO" id="GO:0047961">
    <property type="term" value="F:glycine N-acyltransferase activity"/>
    <property type="evidence" value="ECO:0007669"/>
    <property type="project" value="UniProtKB-EC"/>
</dbReference>
<dbReference type="GO" id="GO:0047962">
    <property type="term" value="F:glycine N-benzoyltransferase activity"/>
    <property type="evidence" value="ECO:0000250"/>
    <property type="project" value="UniProtKB"/>
</dbReference>
<dbReference type="GO" id="GO:1901787">
    <property type="term" value="P:benzoyl-CoA metabolic process"/>
    <property type="evidence" value="ECO:0007669"/>
    <property type="project" value="Ensembl"/>
</dbReference>
<dbReference type="GO" id="GO:0006544">
    <property type="term" value="P:glycine metabolic process"/>
    <property type="evidence" value="ECO:0000250"/>
    <property type="project" value="UniProtKB"/>
</dbReference>
<dbReference type="GO" id="GO:0032787">
    <property type="term" value="P:monocarboxylic acid metabolic process"/>
    <property type="evidence" value="ECO:0000250"/>
    <property type="project" value="UniProtKB"/>
</dbReference>
<dbReference type="GO" id="GO:0009636">
    <property type="term" value="P:response to toxic substance"/>
    <property type="evidence" value="ECO:0007669"/>
    <property type="project" value="UniProtKB-KW"/>
</dbReference>
<dbReference type="FunFam" id="3.40.630.30:FF:000075">
    <property type="entry name" value="Glycine N-acyltransferase"/>
    <property type="match status" value="1"/>
</dbReference>
<dbReference type="Gene3D" id="3.40.630.30">
    <property type="match status" value="1"/>
</dbReference>
<dbReference type="InterPro" id="IPR016181">
    <property type="entry name" value="Acyl_CoA_acyltransferase"/>
</dbReference>
<dbReference type="InterPro" id="IPR010313">
    <property type="entry name" value="Glycine_N-acyltransferase"/>
</dbReference>
<dbReference type="InterPro" id="IPR013652">
    <property type="entry name" value="Glycine_N-acyltransferase_C"/>
</dbReference>
<dbReference type="InterPro" id="IPR015938">
    <property type="entry name" value="Glycine_N-acyltransferase_N"/>
</dbReference>
<dbReference type="PANTHER" id="PTHR15298:SF9">
    <property type="entry name" value="GLYCINE N-ACYLTRANSFERASE"/>
    <property type="match status" value="1"/>
</dbReference>
<dbReference type="PANTHER" id="PTHR15298">
    <property type="entry name" value="L-COA N-ACYLTRANSFERASE-RELATED"/>
    <property type="match status" value="1"/>
</dbReference>
<dbReference type="Pfam" id="PF08444">
    <property type="entry name" value="Gly_acyl_tr_C"/>
    <property type="match status" value="1"/>
</dbReference>
<dbReference type="Pfam" id="PF06021">
    <property type="entry name" value="Gly_acyl_tr_N"/>
    <property type="match status" value="1"/>
</dbReference>
<dbReference type="SUPFAM" id="SSF55729">
    <property type="entry name" value="Acyl-CoA N-acyltransferases (Nat)"/>
    <property type="match status" value="1"/>
</dbReference>
<protein>
    <recommendedName>
        <fullName>Glycine N-acyltransferase</fullName>
        <ecNumber evidence="1">2.3.1.13</ecNumber>
    </recommendedName>
    <alternativeName>
        <fullName>Acyl-CoA:glycine N-acyltransferase</fullName>
        <shortName>AAc</shortName>
    </alternativeName>
    <alternativeName>
        <fullName>Aralkyl acyl-CoA N-acyltransferase</fullName>
    </alternativeName>
    <alternativeName>
        <fullName>Aralkyl acyl-CoA:amino acid N-acyltransferase</fullName>
    </alternativeName>
    <alternativeName>
        <fullName>Benzoyl-coenzyme A:glycine N-acyltransferase</fullName>
    </alternativeName>
    <alternativeName>
        <fullName>Glycine N-benzoyltransferase</fullName>
        <ecNumber evidence="1">2.3.1.71</ecNumber>
    </alternativeName>
</protein>
<comment type="function">
    <text evidence="1">Mitochondrial acyltransferase which transfers an acyl group to the N-terminus of glycine and glutamine, although much less efficiently. Can conjugate a multitude of substrates to form a variety of N-acylglycines, thereby detoxify xenobiotics, such as benzoic acid or salicylic acid, and endogenous organic acids, such as isovaleric acid.</text>
</comment>
<comment type="catalytic activity">
    <reaction evidence="1">
        <text>an acyl-CoA + glycine = an N-acylglycine + CoA + H(+)</text>
        <dbReference type="Rhea" id="RHEA:19869"/>
        <dbReference type="ChEBI" id="CHEBI:15378"/>
        <dbReference type="ChEBI" id="CHEBI:57287"/>
        <dbReference type="ChEBI" id="CHEBI:57305"/>
        <dbReference type="ChEBI" id="CHEBI:57670"/>
        <dbReference type="ChEBI" id="CHEBI:58342"/>
        <dbReference type="EC" id="2.3.1.13"/>
    </reaction>
</comment>
<comment type="catalytic activity">
    <reaction evidence="1">
        <text>benzoyl-CoA + glycine = N-benzoylglycine + CoA + H(+)</text>
        <dbReference type="Rhea" id="RHEA:18493"/>
        <dbReference type="ChEBI" id="CHEBI:15378"/>
        <dbReference type="ChEBI" id="CHEBI:57287"/>
        <dbReference type="ChEBI" id="CHEBI:57305"/>
        <dbReference type="ChEBI" id="CHEBI:57369"/>
        <dbReference type="ChEBI" id="CHEBI:606565"/>
        <dbReference type="EC" id="2.3.1.71"/>
    </reaction>
</comment>
<comment type="subcellular location">
    <subcellularLocation>
        <location evidence="1">Mitochondrion</location>
    </subcellularLocation>
</comment>
<comment type="alternative products">
    <event type="alternative splicing"/>
    <isoform>
        <id>Q91XE0-1</id>
        <name>1</name>
        <sequence type="displayed"/>
    </isoform>
    <isoform>
        <id>Q91XE0-2</id>
        <name>2</name>
        <sequence type="described" ref="VSP_024075"/>
    </isoform>
</comment>
<comment type="similarity">
    <text evidence="3">Belongs to the glycine N-acyltransferase family.</text>
</comment>
<reference key="1">
    <citation type="journal article" date="2005" name="Science">
        <title>The transcriptional landscape of the mammalian genome.</title>
        <authorList>
            <person name="Carninci P."/>
            <person name="Kasukawa T."/>
            <person name="Katayama S."/>
            <person name="Gough J."/>
            <person name="Frith M.C."/>
            <person name="Maeda N."/>
            <person name="Oyama R."/>
            <person name="Ravasi T."/>
            <person name="Lenhard B."/>
            <person name="Wells C."/>
            <person name="Kodzius R."/>
            <person name="Shimokawa K."/>
            <person name="Bajic V.B."/>
            <person name="Brenner S.E."/>
            <person name="Batalov S."/>
            <person name="Forrest A.R."/>
            <person name="Zavolan M."/>
            <person name="Davis M.J."/>
            <person name="Wilming L.G."/>
            <person name="Aidinis V."/>
            <person name="Allen J.E."/>
            <person name="Ambesi-Impiombato A."/>
            <person name="Apweiler R."/>
            <person name="Aturaliya R.N."/>
            <person name="Bailey T.L."/>
            <person name="Bansal M."/>
            <person name="Baxter L."/>
            <person name="Beisel K.W."/>
            <person name="Bersano T."/>
            <person name="Bono H."/>
            <person name="Chalk A.M."/>
            <person name="Chiu K.P."/>
            <person name="Choudhary V."/>
            <person name="Christoffels A."/>
            <person name="Clutterbuck D.R."/>
            <person name="Crowe M.L."/>
            <person name="Dalla E."/>
            <person name="Dalrymple B.P."/>
            <person name="de Bono B."/>
            <person name="Della Gatta G."/>
            <person name="di Bernardo D."/>
            <person name="Down T."/>
            <person name="Engstrom P."/>
            <person name="Fagiolini M."/>
            <person name="Faulkner G."/>
            <person name="Fletcher C.F."/>
            <person name="Fukushima T."/>
            <person name="Furuno M."/>
            <person name="Futaki S."/>
            <person name="Gariboldi M."/>
            <person name="Georgii-Hemming P."/>
            <person name="Gingeras T.R."/>
            <person name="Gojobori T."/>
            <person name="Green R.E."/>
            <person name="Gustincich S."/>
            <person name="Harbers M."/>
            <person name="Hayashi Y."/>
            <person name="Hensch T.K."/>
            <person name="Hirokawa N."/>
            <person name="Hill D."/>
            <person name="Huminiecki L."/>
            <person name="Iacono M."/>
            <person name="Ikeo K."/>
            <person name="Iwama A."/>
            <person name="Ishikawa T."/>
            <person name="Jakt M."/>
            <person name="Kanapin A."/>
            <person name="Katoh M."/>
            <person name="Kawasawa Y."/>
            <person name="Kelso J."/>
            <person name="Kitamura H."/>
            <person name="Kitano H."/>
            <person name="Kollias G."/>
            <person name="Krishnan S.P."/>
            <person name="Kruger A."/>
            <person name="Kummerfeld S.K."/>
            <person name="Kurochkin I.V."/>
            <person name="Lareau L.F."/>
            <person name="Lazarevic D."/>
            <person name="Lipovich L."/>
            <person name="Liu J."/>
            <person name="Liuni S."/>
            <person name="McWilliam S."/>
            <person name="Madan Babu M."/>
            <person name="Madera M."/>
            <person name="Marchionni L."/>
            <person name="Matsuda H."/>
            <person name="Matsuzawa S."/>
            <person name="Miki H."/>
            <person name="Mignone F."/>
            <person name="Miyake S."/>
            <person name="Morris K."/>
            <person name="Mottagui-Tabar S."/>
            <person name="Mulder N."/>
            <person name="Nakano N."/>
            <person name="Nakauchi H."/>
            <person name="Ng P."/>
            <person name="Nilsson R."/>
            <person name="Nishiguchi S."/>
            <person name="Nishikawa S."/>
            <person name="Nori F."/>
            <person name="Ohara O."/>
            <person name="Okazaki Y."/>
            <person name="Orlando V."/>
            <person name="Pang K.C."/>
            <person name="Pavan W.J."/>
            <person name="Pavesi G."/>
            <person name="Pesole G."/>
            <person name="Petrovsky N."/>
            <person name="Piazza S."/>
            <person name="Reed J."/>
            <person name="Reid J.F."/>
            <person name="Ring B.Z."/>
            <person name="Ringwald M."/>
            <person name="Rost B."/>
            <person name="Ruan Y."/>
            <person name="Salzberg S.L."/>
            <person name="Sandelin A."/>
            <person name="Schneider C."/>
            <person name="Schoenbach C."/>
            <person name="Sekiguchi K."/>
            <person name="Semple C.A."/>
            <person name="Seno S."/>
            <person name="Sessa L."/>
            <person name="Sheng Y."/>
            <person name="Shibata Y."/>
            <person name="Shimada H."/>
            <person name="Shimada K."/>
            <person name="Silva D."/>
            <person name="Sinclair B."/>
            <person name="Sperling S."/>
            <person name="Stupka E."/>
            <person name="Sugiura K."/>
            <person name="Sultana R."/>
            <person name="Takenaka Y."/>
            <person name="Taki K."/>
            <person name="Tammoja K."/>
            <person name="Tan S.L."/>
            <person name="Tang S."/>
            <person name="Taylor M.S."/>
            <person name="Tegner J."/>
            <person name="Teichmann S.A."/>
            <person name="Ueda H.R."/>
            <person name="van Nimwegen E."/>
            <person name="Verardo R."/>
            <person name="Wei C.L."/>
            <person name="Yagi K."/>
            <person name="Yamanishi H."/>
            <person name="Zabarovsky E."/>
            <person name="Zhu S."/>
            <person name="Zimmer A."/>
            <person name="Hide W."/>
            <person name="Bult C."/>
            <person name="Grimmond S.M."/>
            <person name="Teasdale R.D."/>
            <person name="Liu E.T."/>
            <person name="Brusic V."/>
            <person name="Quackenbush J."/>
            <person name="Wahlestedt C."/>
            <person name="Mattick J.S."/>
            <person name="Hume D.A."/>
            <person name="Kai C."/>
            <person name="Sasaki D."/>
            <person name="Tomaru Y."/>
            <person name="Fukuda S."/>
            <person name="Kanamori-Katayama M."/>
            <person name="Suzuki M."/>
            <person name="Aoki J."/>
            <person name="Arakawa T."/>
            <person name="Iida J."/>
            <person name="Imamura K."/>
            <person name="Itoh M."/>
            <person name="Kato T."/>
            <person name="Kawaji H."/>
            <person name="Kawagashira N."/>
            <person name="Kawashima T."/>
            <person name="Kojima M."/>
            <person name="Kondo S."/>
            <person name="Konno H."/>
            <person name="Nakano K."/>
            <person name="Ninomiya N."/>
            <person name="Nishio T."/>
            <person name="Okada M."/>
            <person name="Plessy C."/>
            <person name="Shibata K."/>
            <person name="Shiraki T."/>
            <person name="Suzuki S."/>
            <person name="Tagami M."/>
            <person name="Waki K."/>
            <person name="Watahiki A."/>
            <person name="Okamura-Oho Y."/>
            <person name="Suzuki H."/>
            <person name="Kawai J."/>
            <person name="Hayashizaki Y."/>
        </authorList>
    </citation>
    <scope>NUCLEOTIDE SEQUENCE [LARGE SCALE MRNA]</scope>
    <source>
        <strain>C57BL/6J</strain>
        <tissue>Kidney</tissue>
        <tissue>Spinal cord</tissue>
        <tissue>Spleen</tissue>
    </source>
</reference>
<reference key="2">
    <citation type="journal article" date="2004" name="Genome Res.">
        <title>The status, quality, and expansion of the NIH full-length cDNA project: the Mammalian Gene Collection (MGC).</title>
        <authorList>
            <consortium name="The MGC Project Team"/>
        </authorList>
    </citation>
    <scope>NUCLEOTIDE SEQUENCE [LARGE SCALE MRNA] (ISOFORMS 1 AND 2)</scope>
    <source>
        <strain>FVB/N</strain>
        <tissue>Kidney</tissue>
    </source>
</reference>
<reference key="3">
    <citation type="journal article" date="2010" name="Cell">
        <title>A tissue-specific atlas of mouse protein phosphorylation and expression.</title>
        <authorList>
            <person name="Huttlin E.L."/>
            <person name="Jedrychowski M.P."/>
            <person name="Elias J.E."/>
            <person name="Goswami T."/>
            <person name="Rad R."/>
            <person name="Beausoleil S.A."/>
            <person name="Villen J."/>
            <person name="Haas W."/>
            <person name="Sowa M.E."/>
            <person name="Gygi S.P."/>
        </authorList>
    </citation>
    <scope>IDENTIFICATION BY MASS SPECTROMETRY [LARGE SCALE ANALYSIS]</scope>
    <source>
        <tissue>Kidney</tissue>
        <tissue>Liver</tissue>
    </source>
</reference>
<reference key="4">
    <citation type="journal article" date="2013" name="Mol. Cell">
        <title>SIRT5-mediated lysine desuccinylation impacts diverse metabolic pathways.</title>
        <authorList>
            <person name="Park J."/>
            <person name="Chen Y."/>
            <person name="Tishkoff D.X."/>
            <person name="Peng C."/>
            <person name="Tan M."/>
            <person name="Dai L."/>
            <person name="Xie Z."/>
            <person name="Zhang Y."/>
            <person name="Zwaans B.M."/>
            <person name="Skinner M.E."/>
            <person name="Lombard D.B."/>
            <person name="Zhao Y."/>
        </authorList>
    </citation>
    <scope>SUCCINYLATION [LARGE SCALE ANALYSIS] AT LYS-16; LYS-127; LYS-141; LYS-142; LYS-169; LYS-183; LYS-256 AND LYS-267</scope>
    <scope>IDENTIFICATION BY MASS SPECTROMETRY [LARGE SCALE ANALYSIS]</scope>
    <source>
        <tissue>Liver</tissue>
    </source>
</reference>
<reference key="5">
    <citation type="journal article" date="2013" name="Proc. Natl. Acad. Sci. U.S.A.">
        <title>Label-free quantitative proteomics of the lysine acetylome in mitochondria identifies substrates of SIRT3 in metabolic pathways.</title>
        <authorList>
            <person name="Rardin M.J."/>
            <person name="Newman J.C."/>
            <person name="Held J.M."/>
            <person name="Cusack M.P."/>
            <person name="Sorensen D.J."/>
            <person name="Li B."/>
            <person name="Schilling B."/>
            <person name="Mooney S.D."/>
            <person name="Kahn C.R."/>
            <person name="Verdin E."/>
            <person name="Gibson B.W."/>
        </authorList>
    </citation>
    <scope>ACETYLATION [LARGE SCALE ANALYSIS] AT LYS-16; LYS-113; LYS-127; LYS-141; LYS-142; LYS-159; LYS-167; LYS-183 AND LYS-256</scope>
    <scope>IDENTIFICATION BY MASS SPECTROMETRY [LARGE SCALE ANALYSIS]</scope>
    <source>
        <tissue>Liver</tissue>
    </source>
</reference>
<accession>Q91XE0</accession>
<accession>Q05DG2</accession>
<feature type="chain" id="PRO_0000281870" description="Glycine N-acyltransferase">
    <location>
        <begin position="1"/>
        <end position="296"/>
    </location>
</feature>
<feature type="modified residue" description="N6-acetyllysine; alternate" evidence="4">
    <location>
        <position position="16"/>
    </location>
</feature>
<feature type="modified residue" description="N6-succinyllysine; alternate" evidence="5">
    <location>
        <position position="16"/>
    </location>
</feature>
<feature type="modified residue" description="N6-acetyllysine" evidence="4">
    <location>
        <position position="113"/>
    </location>
</feature>
<feature type="modified residue" description="N6-acetyllysine; alternate" evidence="4">
    <location>
        <position position="127"/>
    </location>
</feature>
<feature type="modified residue" description="N6-succinyllysine; alternate" evidence="5">
    <location>
        <position position="127"/>
    </location>
</feature>
<feature type="modified residue" description="N6-acetyllysine; alternate" evidence="4">
    <location>
        <position position="141"/>
    </location>
</feature>
<feature type="modified residue" description="N6-succinyllysine; alternate" evidence="5">
    <location>
        <position position="141"/>
    </location>
</feature>
<feature type="modified residue" description="N6-acetyllysine; alternate" evidence="4">
    <location>
        <position position="142"/>
    </location>
</feature>
<feature type="modified residue" description="N6-succinyllysine; alternate" evidence="5">
    <location>
        <position position="142"/>
    </location>
</feature>
<feature type="modified residue" description="N6-acetyllysine" evidence="4">
    <location>
        <position position="159"/>
    </location>
</feature>
<feature type="modified residue" description="N6-acetyllysine" evidence="4">
    <location>
        <position position="167"/>
    </location>
</feature>
<feature type="modified residue" description="N6-succinyllysine" evidence="5">
    <location>
        <position position="169"/>
    </location>
</feature>
<feature type="modified residue" description="N6-acetyllysine; alternate" evidence="4">
    <location>
        <position position="183"/>
    </location>
</feature>
<feature type="modified residue" description="N6-succinyllysine; alternate" evidence="5">
    <location>
        <position position="183"/>
    </location>
</feature>
<feature type="modified residue" description="N6-acetyllysine; alternate" evidence="4">
    <location>
        <position position="256"/>
    </location>
</feature>
<feature type="modified residue" description="N6-succinyllysine; alternate" evidence="5">
    <location>
        <position position="256"/>
    </location>
</feature>
<feature type="modified residue" description="N6-succinyllysine" evidence="5">
    <location>
        <position position="267"/>
    </location>
</feature>
<feature type="splice variant" id="VSP_024075" description="In isoform 2." evidence="2">
    <location>
        <begin position="1"/>
        <end position="34"/>
    </location>
</feature>
<proteinExistence type="evidence at protein level"/>
<name>GLYAT_MOUSE</name>
<keyword id="KW-0007">Acetylation</keyword>
<keyword id="KW-0012">Acyltransferase</keyword>
<keyword id="KW-0025">Alternative splicing</keyword>
<keyword id="KW-0216">Detoxification</keyword>
<keyword id="KW-0496">Mitochondrion</keyword>
<keyword id="KW-1185">Reference proteome</keyword>
<keyword id="KW-0808">Transferase</keyword>
<organism>
    <name type="scientific">Mus musculus</name>
    <name type="common">Mouse</name>
    <dbReference type="NCBI Taxonomy" id="10090"/>
    <lineage>
        <taxon>Eukaryota</taxon>
        <taxon>Metazoa</taxon>
        <taxon>Chordata</taxon>
        <taxon>Craniata</taxon>
        <taxon>Vertebrata</taxon>
        <taxon>Euteleostomi</taxon>
        <taxon>Mammalia</taxon>
        <taxon>Eutheria</taxon>
        <taxon>Euarchontoglires</taxon>
        <taxon>Glires</taxon>
        <taxon>Rodentia</taxon>
        <taxon>Myomorpha</taxon>
        <taxon>Muroidea</taxon>
        <taxon>Muridae</taxon>
        <taxon>Murinae</taxon>
        <taxon>Mus</taxon>
        <taxon>Mus</taxon>
    </lineage>
</organism>
<sequence>MIVPLQGAQMLQMLEKSLRKYLPESLKVYGTVYHMIHGNPFNLKALVDKWPDFNTVVVRPQEQEMTDDLDFYINTYQVYSKDPQNCQEFLESSEVINWKQHLQIQSSQSHLNKTIQNLASIQSFQIKHSENILYVSSETIKKLFPSLLDTKNLSTGSGKPKAIDQDKFKLSSLDVVHAALVNKFWLFGGNERSQRFIERCIKNFPSSCVLGPEGTPASWTLMDQTGEMRMGGTMPEYRLQGLVSFVVHSQDQIMTKRGYPVYSHTEKSNIAMQKMSYTLQHLPMPCAWNQWKCMPM</sequence>